<feature type="chain" id="PRO_1000057043" description="Argininosuccinate synthase">
    <location>
        <begin position="1"/>
        <end position="403"/>
    </location>
</feature>
<feature type="binding site" evidence="1">
    <location>
        <begin position="12"/>
        <end position="20"/>
    </location>
    <ligand>
        <name>ATP</name>
        <dbReference type="ChEBI" id="CHEBI:30616"/>
    </ligand>
</feature>
<feature type="binding site" evidence="1">
    <location>
        <position position="39"/>
    </location>
    <ligand>
        <name>ATP</name>
        <dbReference type="ChEBI" id="CHEBI:30616"/>
    </ligand>
</feature>
<feature type="binding site" evidence="1">
    <location>
        <position position="90"/>
    </location>
    <ligand>
        <name>L-citrulline</name>
        <dbReference type="ChEBI" id="CHEBI:57743"/>
    </ligand>
</feature>
<feature type="binding site" evidence="1">
    <location>
        <position position="95"/>
    </location>
    <ligand>
        <name>L-citrulline</name>
        <dbReference type="ChEBI" id="CHEBI:57743"/>
    </ligand>
</feature>
<feature type="binding site" evidence="1">
    <location>
        <position position="120"/>
    </location>
    <ligand>
        <name>ATP</name>
        <dbReference type="ChEBI" id="CHEBI:30616"/>
    </ligand>
</feature>
<feature type="binding site" evidence="1">
    <location>
        <position position="122"/>
    </location>
    <ligand>
        <name>L-aspartate</name>
        <dbReference type="ChEBI" id="CHEBI:29991"/>
    </ligand>
</feature>
<feature type="binding site" evidence="1">
    <location>
        <position position="126"/>
    </location>
    <ligand>
        <name>L-aspartate</name>
        <dbReference type="ChEBI" id="CHEBI:29991"/>
    </ligand>
</feature>
<feature type="binding site" evidence="1">
    <location>
        <position position="126"/>
    </location>
    <ligand>
        <name>L-citrulline</name>
        <dbReference type="ChEBI" id="CHEBI:57743"/>
    </ligand>
</feature>
<feature type="binding site" evidence="1">
    <location>
        <position position="127"/>
    </location>
    <ligand>
        <name>L-aspartate</name>
        <dbReference type="ChEBI" id="CHEBI:29991"/>
    </ligand>
</feature>
<feature type="binding site" evidence="1">
    <location>
        <position position="130"/>
    </location>
    <ligand>
        <name>L-citrulline</name>
        <dbReference type="ChEBI" id="CHEBI:57743"/>
    </ligand>
</feature>
<feature type="binding site" evidence="1">
    <location>
        <position position="182"/>
    </location>
    <ligand>
        <name>L-citrulline</name>
        <dbReference type="ChEBI" id="CHEBI:57743"/>
    </ligand>
</feature>
<feature type="binding site" evidence="1">
    <location>
        <position position="191"/>
    </location>
    <ligand>
        <name>L-citrulline</name>
        <dbReference type="ChEBI" id="CHEBI:57743"/>
    </ligand>
</feature>
<feature type="binding site" evidence="1">
    <location>
        <position position="267"/>
    </location>
    <ligand>
        <name>L-citrulline</name>
        <dbReference type="ChEBI" id="CHEBI:57743"/>
    </ligand>
</feature>
<feature type="binding site" evidence="1">
    <location>
        <position position="279"/>
    </location>
    <ligand>
        <name>L-citrulline</name>
        <dbReference type="ChEBI" id="CHEBI:57743"/>
    </ligand>
</feature>
<gene>
    <name evidence="1" type="primary">argG</name>
    <name type="ordered locus">Rmag_0151</name>
</gene>
<protein>
    <recommendedName>
        <fullName evidence="1">Argininosuccinate synthase</fullName>
        <ecNumber evidence="1">6.3.4.5</ecNumber>
    </recommendedName>
    <alternativeName>
        <fullName evidence="1">Citrulline--aspartate ligase</fullName>
    </alternativeName>
</protein>
<reference key="1">
    <citation type="journal article" date="2007" name="Science">
        <title>The Calyptogena magnifica chemoautotrophic symbiont genome.</title>
        <authorList>
            <person name="Newton I.L.G."/>
            <person name="Woyke T."/>
            <person name="Auchtung T.A."/>
            <person name="Dilly G.F."/>
            <person name="Dutton R.J."/>
            <person name="Fisher M.C."/>
            <person name="Fontanez K.M."/>
            <person name="Lau E."/>
            <person name="Stewart F.J."/>
            <person name="Richardson P.M."/>
            <person name="Barry K.W."/>
            <person name="Saunders E."/>
            <person name="Detter J.C."/>
            <person name="Wu D."/>
            <person name="Eisen J.A."/>
            <person name="Cavanaugh C.M."/>
        </authorList>
    </citation>
    <scope>NUCLEOTIDE SEQUENCE [LARGE SCALE GENOMIC DNA]</scope>
</reference>
<name>ASSY_RUTMC</name>
<keyword id="KW-0028">Amino-acid biosynthesis</keyword>
<keyword id="KW-0055">Arginine biosynthesis</keyword>
<keyword id="KW-0067">ATP-binding</keyword>
<keyword id="KW-0963">Cytoplasm</keyword>
<keyword id="KW-0436">Ligase</keyword>
<keyword id="KW-0547">Nucleotide-binding</keyword>
<evidence type="ECO:0000255" key="1">
    <source>
        <dbReference type="HAMAP-Rule" id="MF_00005"/>
    </source>
</evidence>
<organism>
    <name type="scientific">Ruthia magnifica subsp. Calyptogena magnifica</name>
    <dbReference type="NCBI Taxonomy" id="413404"/>
    <lineage>
        <taxon>Bacteria</taxon>
        <taxon>Pseudomonadati</taxon>
        <taxon>Pseudomonadota</taxon>
        <taxon>Gammaproteobacteria</taxon>
        <taxon>Candidatus Pseudothioglobaceae</taxon>
        <taxon>Candidatus Ruthturnera</taxon>
    </lineage>
</organism>
<accession>A1AVI7</accession>
<proteinExistence type="inferred from homology"/>
<comment type="catalytic activity">
    <reaction evidence="1">
        <text>L-citrulline + L-aspartate + ATP = 2-(N(omega)-L-arginino)succinate + AMP + diphosphate + H(+)</text>
        <dbReference type="Rhea" id="RHEA:10932"/>
        <dbReference type="ChEBI" id="CHEBI:15378"/>
        <dbReference type="ChEBI" id="CHEBI:29991"/>
        <dbReference type="ChEBI" id="CHEBI:30616"/>
        <dbReference type="ChEBI" id="CHEBI:33019"/>
        <dbReference type="ChEBI" id="CHEBI:57472"/>
        <dbReference type="ChEBI" id="CHEBI:57743"/>
        <dbReference type="ChEBI" id="CHEBI:456215"/>
        <dbReference type="EC" id="6.3.4.5"/>
    </reaction>
</comment>
<comment type="pathway">
    <text evidence="1">Amino-acid biosynthesis; L-arginine biosynthesis; L-arginine from L-ornithine and carbamoyl phosphate: step 2/3.</text>
</comment>
<comment type="subunit">
    <text evidence="1">Homotetramer.</text>
</comment>
<comment type="subcellular location">
    <subcellularLocation>
        <location evidence="1">Cytoplasm</location>
    </subcellularLocation>
</comment>
<comment type="similarity">
    <text evidence="1">Belongs to the argininosuccinate synthase family. Type 1 subfamily.</text>
</comment>
<sequence length="403" mass="45408">MNKINIKKVVLAYSGGLDTSIIVKWLQDTYRCEVVTFTADIGQGEEVELARTKAKAAGVKEVYIENLREEFVRDFVFPMFRANAIYEGEYLLGTSIARPLISKRLVEIAHQEDADAISHGATGKGNDQVRFELNAYALDADIQVIAPWREWDLSSRESLMDYAQKHGIEIDYKKQLKKSPYSMDANLLHISYEGGILEDPWAEPEEDMWRWTVSPENAPNKAEYVEITFKKGGIIAINGKTMSPASVMEDLNKRAGAHGIGRNDIVENRFVGMKSRGCYETPAGTVMLKAHRAMESLTLDQAAAHLKDELMPKYAEMVYNGFWFAPERKMLQAAIDNTQEIVNGIVRLKFYKGNVTVVGRQSKDSLFSEKIATFEDDEGAYNQKDAAGFIKLNALRLRLKALK</sequence>
<dbReference type="EC" id="6.3.4.5" evidence="1"/>
<dbReference type="EMBL" id="CP000488">
    <property type="protein sequence ID" value="ABL01944.1"/>
    <property type="molecule type" value="Genomic_DNA"/>
</dbReference>
<dbReference type="RefSeq" id="WP_011737570.1">
    <property type="nucleotide sequence ID" value="NC_008610.1"/>
</dbReference>
<dbReference type="SMR" id="A1AVI7"/>
<dbReference type="STRING" id="413404.Rmag_0151"/>
<dbReference type="KEGG" id="rma:Rmag_0151"/>
<dbReference type="eggNOG" id="COG0137">
    <property type="taxonomic scope" value="Bacteria"/>
</dbReference>
<dbReference type="HOGENOM" id="CLU_032784_4_2_6"/>
<dbReference type="OrthoDB" id="9801641at2"/>
<dbReference type="UniPathway" id="UPA00068">
    <property type="reaction ID" value="UER00113"/>
</dbReference>
<dbReference type="Proteomes" id="UP000002587">
    <property type="component" value="Chromosome"/>
</dbReference>
<dbReference type="GO" id="GO:0005737">
    <property type="term" value="C:cytoplasm"/>
    <property type="evidence" value="ECO:0007669"/>
    <property type="project" value="UniProtKB-SubCell"/>
</dbReference>
<dbReference type="GO" id="GO:0004055">
    <property type="term" value="F:argininosuccinate synthase activity"/>
    <property type="evidence" value="ECO:0007669"/>
    <property type="project" value="UniProtKB-UniRule"/>
</dbReference>
<dbReference type="GO" id="GO:0005524">
    <property type="term" value="F:ATP binding"/>
    <property type="evidence" value="ECO:0007669"/>
    <property type="project" value="UniProtKB-UniRule"/>
</dbReference>
<dbReference type="GO" id="GO:0000053">
    <property type="term" value="P:argininosuccinate metabolic process"/>
    <property type="evidence" value="ECO:0007669"/>
    <property type="project" value="TreeGrafter"/>
</dbReference>
<dbReference type="GO" id="GO:0006526">
    <property type="term" value="P:L-arginine biosynthetic process"/>
    <property type="evidence" value="ECO:0007669"/>
    <property type="project" value="UniProtKB-UniRule"/>
</dbReference>
<dbReference type="GO" id="GO:0000050">
    <property type="term" value="P:urea cycle"/>
    <property type="evidence" value="ECO:0007669"/>
    <property type="project" value="TreeGrafter"/>
</dbReference>
<dbReference type="CDD" id="cd01999">
    <property type="entry name" value="ASS"/>
    <property type="match status" value="1"/>
</dbReference>
<dbReference type="FunFam" id="3.40.50.620:FF:000019">
    <property type="entry name" value="Argininosuccinate synthase"/>
    <property type="match status" value="1"/>
</dbReference>
<dbReference type="FunFam" id="3.90.1260.10:FF:000007">
    <property type="entry name" value="Argininosuccinate synthase"/>
    <property type="match status" value="1"/>
</dbReference>
<dbReference type="Gene3D" id="3.90.1260.10">
    <property type="entry name" value="Argininosuccinate synthetase, chain A, domain 2"/>
    <property type="match status" value="1"/>
</dbReference>
<dbReference type="Gene3D" id="3.40.50.620">
    <property type="entry name" value="HUPs"/>
    <property type="match status" value="1"/>
</dbReference>
<dbReference type="Gene3D" id="1.20.5.470">
    <property type="entry name" value="Single helix bin"/>
    <property type="match status" value="1"/>
</dbReference>
<dbReference type="HAMAP" id="MF_00005">
    <property type="entry name" value="Arg_succ_synth_type1"/>
    <property type="match status" value="1"/>
</dbReference>
<dbReference type="InterPro" id="IPR048268">
    <property type="entry name" value="Arginosuc_syn_C"/>
</dbReference>
<dbReference type="InterPro" id="IPR048267">
    <property type="entry name" value="Arginosuc_syn_N"/>
</dbReference>
<dbReference type="InterPro" id="IPR001518">
    <property type="entry name" value="Arginosuc_synth"/>
</dbReference>
<dbReference type="InterPro" id="IPR018223">
    <property type="entry name" value="Arginosuc_synth_CS"/>
</dbReference>
<dbReference type="InterPro" id="IPR023434">
    <property type="entry name" value="Arginosuc_synth_type_1_subfam"/>
</dbReference>
<dbReference type="InterPro" id="IPR024074">
    <property type="entry name" value="AS_cat/multimer_dom_body"/>
</dbReference>
<dbReference type="InterPro" id="IPR014729">
    <property type="entry name" value="Rossmann-like_a/b/a_fold"/>
</dbReference>
<dbReference type="NCBIfam" id="TIGR00032">
    <property type="entry name" value="argG"/>
    <property type="match status" value="1"/>
</dbReference>
<dbReference type="NCBIfam" id="NF001770">
    <property type="entry name" value="PRK00509.1"/>
    <property type="match status" value="1"/>
</dbReference>
<dbReference type="PANTHER" id="PTHR11587">
    <property type="entry name" value="ARGININOSUCCINATE SYNTHASE"/>
    <property type="match status" value="1"/>
</dbReference>
<dbReference type="PANTHER" id="PTHR11587:SF2">
    <property type="entry name" value="ARGININOSUCCINATE SYNTHASE"/>
    <property type="match status" value="1"/>
</dbReference>
<dbReference type="Pfam" id="PF20979">
    <property type="entry name" value="Arginosuc_syn_C"/>
    <property type="match status" value="1"/>
</dbReference>
<dbReference type="Pfam" id="PF00764">
    <property type="entry name" value="Arginosuc_synth"/>
    <property type="match status" value="1"/>
</dbReference>
<dbReference type="SUPFAM" id="SSF52402">
    <property type="entry name" value="Adenine nucleotide alpha hydrolases-like"/>
    <property type="match status" value="1"/>
</dbReference>
<dbReference type="SUPFAM" id="SSF69864">
    <property type="entry name" value="Argininosuccinate synthetase, C-terminal domain"/>
    <property type="match status" value="1"/>
</dbReference>
<dbReference type="PROSITE" id="PS00564">
    <property type="entry name" value="ARGININOSUCCIN_SYN_1"/>
    <property type="match status" value="1"/>
</dbReference>
<dbReference type="PROSITE" id="PS00565">
    <property type="entry name" value="ARGININOSUCCIN_SYN_2"/>
    <property type="match status" value="1"/>
</dbReference>